<protein>
    <recommendedName>
        <fullName>Gene 62 protein</fullName>
    </recommendedName>
    <alternativeName>
        <fullName>Gp62</fullName>
    </alternativeName>
</protein>
<organismHost>
    <name type="scientific">Mycobacterium</name>
    <dbReference type="NCBI Taxonomy" id="1763"/>
</organismHost>
<name>VG62_BPML5</name>
<organism>
    <name type="scientific">Mycobacterium phage L5</name>
    <name type="common">Mycobacteriophage L5</name>
    <dbReference type="NCBI Taxonomy" id="31757"/>
    <lineage>
        <taxon>Viruses</taxon>
        <taxon>Duplodnaviria</taxon>
        <taxon>Heunggongvirae</taxon>
        <taxon>Uroviricota</taxon>
        <taxon>Caudoviricetes</taxon>
        <taxon>Fromanvirus</taxon>
    </lineage>
</organism>
<feature type="chain" id="PRO_0000164798" description="Gene 62 protein">
    <location>
        <begin position="1"/>
        <end position="51"/>
    </location>
</feature>
<dbReference type="EMBL" id="Z18946">
    <property type="protein sequence ID" value="CAA79438.1"/>
    <property type="molecule type" value="Genomic_DNA"/>
</dbReference>
<dbReference type="PIR" id="S31007">
    <property type="entry name" value="S31007"/>
</dbReference>
<dbReference type="RefSeq" id="NP_039726.1">
    <property type="nucleotide sequence ID" value="NC_001335.1"/>
</dbReference>
<dbReference type="GeneID" id="2942912"/>
<dbReference type="KEGG" id="vg:2942912"/>
<dbReference type="OrthoDB" id="25225at10239"/>
<dbReference type="Proteomes" id="UP000002123">
    <property type="component" value="Genome"/>
</dbReference>
<gene>
    <name type="primary">62</name>
</gene>
<accession>Q05275</accession>
<proteinExistence type="predicted"/>
<sequence>MKYGVRYPISGVHECPFGYKQAQMIQFLATRYGVYEAELVTSHDGLQWEAI</sequence>
<reference key="1">
    <citation type="journal article" date="1993" name="Mol. Microbiol.">
        <title>DNA sequence, structure and gene expression of mycobacteriophage L5: a phage system for mycobacterial genetics.</title>
        <authorList>
            <person name="Hatfull G.F."/>
            <person name="Sarkis G.J."/>
        </authorList>
    </citation>
    <scope>NUCLEOTIDE SEQUENCE [LARGE SCALE GENOMIC DNA]</scope>
</reference>
<keyword id="KW-1185">Reference proteome</keyword>